<organism>
    <name type="scientific">Pectobacterium carotovorum subsp. carotovorum (strain PC1)</name>
    <dbReference type="NCBI Taxonomy" id="561230"/>
    <lineage>
        <taxon>Bacteria</taxon>
        <taxon>Pseudomonadati</taxon>
        <taxon>Pseudomonadota</taxon>
        <taxon>Gammaproteobacteria</taxon>
        <taxon>Enterobacterales</taxon>
        <taxon>Pectobacteriaceae</taxon>
        <taxon>Pectobacterium</taxon>
    </lineage>
</organism>
<sequence>MIDQTAFIHPSSIVEDGAIIGAGVHIGPFCYIGSQVEIGAGTVLKSHVVVNGVTKIGRDNEIYQFTSIGEVNQDLKYAGEPTRVEIGDRNRIRESVTIHRGTTQGGGLTKVGSDNLLMINTHIAHDCVVGNRCILANNATLGGHVSVDDFAIIGGMTAVHQFCIIGAHVMVGGCSGVAQDVPPYVIAQGNHATPFGLNIEGLKRRGFEKDTLHAIRNAYKLLYRSGKTLDEVKPEIEALAAEHPAVQAFTDFFARSTRGIIR</sequence>
<proteinExistence type="inferred from homology"/>
<evidence type="ECO:0000255" key="1">
    <source>
        <dbReference type="HAMAP-Rule" id="MF_00387"/>
    </source>
</evidence>
<dbReference type="EC" id="2.3.1.129" evidence="1"/>
<dbReference type="EMBL" id="CP001657">
    <property type="protein sequence ID" value="ACT12003.1"/>
    <property type="molecule type" value="Genomic_DNA"/>
</dbReference>
<dbReference type="RefSeq" id="WP_012773641.1">
    <property type="nucleotide sequence ID" value="NC_012917.1"/>
</dbReference>
<dbReference type="SMR" id="C6DAJ5"/>
<dbReference type="STRING" id="561230.PC1_0953"/>
<dbReference type="GeneID" id="67795270"/>
<dbReference type="KEGG" id="pct:PC1_0953"/>
<dbReference type="eggNOG" id="COG1043">
    <property type="taxonomic scope" value="Bacteria"/>
</dbReference>
<dbReference type="HOGENOM" id="CLU_061249_0_0_6"/>
<dbReference type="OrthoDB" id="9807278at2"/>
<dbReference type="UniPathway" id="UPA00359">
    <property type="reaction ID" value="UER00477"/>
</dbReference>
<dbReference type="Proteomes" id="UP000002736">
    <property type="component" value="Chromosome"/>
</dbReference>
<dbReference type="GO" id="GO:0005737">
    <property type="term" value="C:cytoplasm"/>
    <property type="evidence" value="ECO:0007669"/>
    <property type="project" value="UniProtKB-SubCell"/>
</dbReference>
<dbReference type="GO" id="GO:0016020">
    <property type="term" value="C:membrane"/>
    <property type="evidence" value="ECO:0007669"/>
    <property type="project" value="GOC"/>
</dbReference>
<dbReference type="GO" id="GO:0008780">
    <property type="term" value="F:acyl-[acyl-carrier-protein]-UDP-N-acetylglucosamine O-acyltransferase activity"/>
    <property type="evidence" value="ECO:0007669"/>
    <property type="project" value="UniProtKB-UniRule"/>
</dbReference>
<dbReference type="GO" id="GO:0009245">
    <property type="term" value="P:lipid A biosynthetic process"/>
    <property type="evidence" value="ECO:0007669"/>
    <property type="project" value="UniProtKB-UniRule"/>
</dbReference>
<dbReference type="CDD" id="cd03351">
    <property type="entry name" value="LbH_UDP-GlcNAc_AT"/>
    <property type="match status" value="1"/>
</dbReference>
<dbReference type="FunFam" id="2.160.10.10:FF:000003">
    <property type="entry name" value="Acyl-[acyl-carrier-protein]--UDP-N-acetylglucosamine O-acyltransferase"/>
    <property type="match status" value="1"/>
</dbReference>
<dbReference type="Gene3D" id="2.160.10.10">
    <property type="entry name" value="Hexapeptide repeat proteins"/>
    <property type="match status" value="1"/>
</dbReference>
<dbReference type="Gene3D" id="1.20.1180.10">
    <property type="entry name" value="Udp N-acetylglucosamine O-acyltransferase, C-terminal domain"/>
    <property type="match status" value="1"/>
</dbReference>
<dbReference type="HAMAP" id="MF_00387">
    <property type="entry name" value="LpxA"/>
    <property type="match status" value="1"/>
</dbReference>
<dbReference type="InterPro" id="IPR029098">
    <property type="entry name" value="Acetyltransf_C"/>
</dbReference>
<dbReference type="InterPro" id="IPR037157">
    <property type="entry name" value="Acetyltransf_C_sf"/>
</dbReference>
<dbReference type="InterPro" id="IPR001451">
    <property type="entry name" value="Hexapep"/>
</dbReference>
<dbReference type="InterPro" id="IPR018357">
    <property type="entry name" value="Hexapep_transf_CS"/>
</dbReference>
<dbReference type="InterPro" id="IPR010137">
    <property type="entry name" value="Lipid_A_LpxA"/>
</dbReference>
<dbReference type="InterPro" id="IPR011004">
    <property type="entry name" value="Trimer_LpxA-like_sf"/>
</dbReference>
<dbReference type="NCBIfam" id="TIGR01852">
    <property type="entry name" value="lipid_A_lpxA"/>
    <property type="match status" value="1"/>
</dbReference>
<dbReference type="NCBIfam" id="NF003657">
    <property type="entry name" value="PRK05289.1"/>
    <property type="match status" value="1"/>
</dbReference>
<dbReference type="PANTHER" id="PTHR43480">
    <property type="entry name" value="ACYL-[ACYL-CARRIER-PROTEIN]--UDP-N-ACETYLGLUCOSAMINE O-ACYLTRANSFERASE"/>
    <property type="match status" value="1"/>
</dbReference>
<dbReference type="PANTHER" id="PTHR43480:SF1">
    <property type="entry name" value="ACYL-[ACYL-CARRIER-PROTEIN]--UDP-N-ACETYLGLUCOSAMINE O-ACYLTRANSFERASE, MITOCHONDRIAL-RELATED"/>
    <property type="match status" value="1"/>
</dbReference>
<dbReference type="Pfam" id="PF13720">
    <property type="entry name" value="Acetyltransf_11"/>
    <property type="match status" value="1"/>
</dbReference>
<dbReference type="Pfam" id="PF00132">
    <property type="entry name" value="Hexapep"/>
    <property type="match status" value="2"/>
</dbReference>
<dbReference type="PIRSF" id="PIRSF000456">
    <property type="entry name" value="UDP-GlcNAc_acltr"/>
    <property type="match status" value="1"/>
</dbReference>
<dbReference type="SUPFAM" id="SSF51161">
    <property type="entry name" value="Trimeric LpxA-like enzymes"/>
    <property type="match status" value="1"/>
</dbReference>
<dbReference type="PROSITE" id="PS00101">
    <property type="entry name" value="HEXAPEP_TRANSFERASES"/>
    <property type="match status" value="2"/>
</dbReference>
<comment type="function">
    <text evidence="1">Involved in the biosynthesis of lipid A, a phosphorylated glycolipid that anchors the lipopolysaccharide to the outer membrane of the cell.</text>
</comment>
<comment type="catalytic activity">
    <reaction evidence="1">
        <text>a (3R)-hydroxyacyl-[ACP] + UDP-N-acetyl-alpha-D-glucosamine = a UDP-3-O-[(3R)-3-hydroxyacyl]-N-acetyl-alpha-D-glucosamine + holo-[ACP]</text>
        <dbReference type="Rhea" id="RHEA:67812"/>
        <dbReference type="Rhea" id="RHEA-COMP:9685"/>
        <dbReference type="Rhea" id="RHEA-COMP:9945"/>
        <dbReference type="ChEBI" id="CHEBI:57705"/>
        <dbReference type="ChEBI" id="CHEBI:64479"/>
        <dbReference type="ChEBI" id="CHEBI:78827"/>
        <dbReference type="ChEBI" id="CHEBI:173225"/>
        <dbReference type="EC" id="2.3.1.129"/>
    </reaction>
</comment>
<comment type="pathway">
    <text evidence="1">Glycolipid biosynthesis; lipid IV(A) biosynthesis; lipid IV(A) from (3R)-3-hydroxytetradecanoyl-[acyl-carrier-protein] and UDP-N-acetyl-alpha-D-glucosamine: step 1/6.</text>
</comment>
<comment type="subunit">
    <text evidence="1">Homotrimer.</text>
</comment>
<comment type="subcellular location">
    <subcellularLocation>
        <location evidence="1">Cytoplasm</location>
    </subcellularLocation>
</comment>
<comment type="similarity">
    <text evidence="1">Belongs to the transferase hexapeptide repeat family. LpxA subfamily.</text>
</comment>
<gene>
    <name evidence="1" type="primary">lpxA</name>
    <name type="ordered locus">PC1_0953</name>
</gene>
<protein>
    <recommendedName>
        <fullName evidence="1">Acyl-[acyl-carrier-protein]--UDP-N-acetylglucosamine O-acyltransferase</fullName>
        <shortName evidence="1">UDP-N-acetylglucosamine acyltransferase</shortName>
        <ecNumber evidence="1">2.3.1.129</ecNumber>
    </recommendedName>
</protein>
<keyword id="KW-0012">Acyltransferase</keyword>
<keyword id="KW-0963">Cytoplasm</keyword>
<keyword id="KW-0441">Lipid A biosynthesis</keyword>
<keyword id="KW-0444">Lipid biosynthesis</keyword>
<keyword id="KW-0443">Lipid metabolism</keyword>
<keyword id="KW-0677">Repeat</keyword>
<keyword id="KW-0808">Transferase</keyword>
<feature type="chain" id="PRO_1000205796" description="Acyl-[acyl-carrier-protein]--UDP-N-acetylglucosamine O-acyltransferase">
    <location>
        <begin position="1"/>
        <end position="262"/>
    </location>
</feature>
<accession>C6DAJ5</accession>
<reference key="1">
    <citation type="submission" date="2009-07" db="EMBL/GenBank/DDBJ databases">
        <title>Complete sequence of Pectobacterium carotovorum subsp. carotovorum PC1.</title>
        <authorList>
            <consortium name="US DOE Joint Genome Institute"/>
            <person name="Lucas S."/>
            <person name="Copeland A."/>
            <person name="Lapidus A."/>
            <person name="Glavina del Rio T."/>
            <person name="Tice H."/>
            <person name="Bruce D."/>
            <person name="Goodwin L."/>
            <person name="Pitluck S."/>
            <person name="Munk A.C."/>
            <person name="Brettin T."/>
            <person name="Detter J.C."/>
            <person name="Han C."/>
            <person name="Tapia R."/>
            <person name="Larimer F."/>
            <person name="Land M."/>
            <person name="Hauser L."/>
            <person name="Kyrpides N."/>
            <person name="Mikhailova N."/>
            <person name="Balakrishnan V."/>
            <person name="Glasner J."/>
            <person name="Perna N.T."/>
        </authorList>
    </citation>
    <scope>NUCLEOTIDE SEQUENCE [LARGE SCALE GENOMIC DNA]</scope>
    <source>
        <strain>PC1</strain>
    </source>
</reference>
<name>LPXA_PECCP</name>